<proteinExistence type="evidence at protein level"/>
<gene>
    <name evidence="5" type="primary">cpg-9</name>
    <name type="ORF">Y67D8C.8</name>
</gene>
<organism>
    <name type="scientific">Caenorhabditis elegans</name>
    <dbReference type="NCBI Taxonomy" id="6239"/>
    <lineage>
        <taxon>Eukaryota</taxon>
        <taxon>Metazoa</taxon>
        <taxon>Ecdysozoa</taxon>
        <taxon>Nematoda</taxon>
        <taxon>Chromadorea</taxon>
        <taxon>Rhabditida</taxon>
        <taxon>Rhabditina</taxon>
        <taxon>Rhabditomorpha</taxon>
        <taxon>Rhabditoidea</taxon>
        <taxon>Rhabditidae</taxon>
        <taxon>Peloderinae</taxon>
        <taxon>Caenorhabditis</taxon>
    </lineage>
</organism>
<dbReference type="EMBL" id="DQ340631">
    <property type="protein sequence ID" value="ABC65819.1"/>
    <property type="molecule type" value="mRNA"/>
</dbReference>
<dbReference type="EMBL" id="FO081744">
    <property type="protein sequence ID" value="CCD74097.1"/>
    <property type="molecule type" value="Genomic_DNA"/>
</dbReference>
<dbReference type="RefSeq" id="NP_500289.1">
    <property type="nucleotide sequence ID" value="NM_067888.10"/>
</dbReference>
<dbReference type="SMR" id="Q95XP7"/>
<dbReference type="FunCoup" id="Q95XP7">
    <property type="interactions" value="1512"/>
</dbReference>
<dbReference type="STRING" id="6239.Y67D8C.8.1"/>
<dbReference type="GlyCosmos" id="Q95XP7">
    <property type="glycosylation" value="2 sites, No reported glycans"/>
</dbReference>
<dbReference type="iPTMnet" id="Q95XP7"/>
<dbReference type="PaxDb" id="6239-Y67D8C.8"/>
<dbReference type="EnsemblMetazoa" id="Y67D8C.8.1">
    <property type="protein sequence ID" value="Y67D8C.8.1"/>
    <property type="gene ID" value="WBGene00022072"/>
</dbReference>
<dbReference type="GeneID" id="177087"/>
<dbReference type="KEGG" id="cel:CELE_Y67D8C.8"/>
<dbReference type="UCSC" id="Y67D8C.8">
    <property type="organism name" value="c. elegans"/>
</dbReference>
<dbReference type="AGR" id="WB:WBGene00022072"/>
<dbReference type="CTD" id="177087"/>
<dbReference type="WormBase" id="Y67D8C.8">
    <property type="protein sequence ID" value="CE27506"/>
    <property type="gene ID" value="WBGene00022072"/>
    <property type="gene designation" value="cpg-9"/>
</dbReference>
<dbReference type="eggNOG" id="ENOG502RAJP">
    <property type="taxonomic scope" value="Eukaryota"/>
</dbReference>
<dbReference type="HOGENOM" id="CLU_2742361_0_0_1"/>
<dbReference type="InParanoid" id="Q95XP7"/>
<dbReference type="OMA" id="MNFWHLL"/>
<dbReference type="OrthoDB" id="5859798at2759"/>
<dbReference type="PRO" id="PR:Q95XP7"/>
<dbReference type="Proteomes" id="UP000001940">
    <property type="component" value="Chromosome IV"/>
</dbReference>
<dbReference type="Bgee" id="WBGene00022072">
    <property type="expression patterns" value="Expressed in larva and 3 other cell types or tissues"/>
</dbReference>
<evidence type="ECO:0000255" key="1"/>
<evidence type="ECO:0000269" key="2">
    <source>
    </source>
</evidence>
<evidence type="ECO:0000305" key="3"/>
<evidence type="ECO:0000312" key="4">
    <source>
        <dbReference type="EMBL" id="ABC65819.1"/>
    </source>
</evidence>
<evidence type="ECO:0000312" key="5">
    <source>
        <dbReference type="WormBase" id="Y67D8C.8"/>
    </source>
</evidence>
<keyword id="KW-0325">Glycoprotein</keyword>
<keyword id="KW-0654">Proteoglycan</keyword>
<keyword id="KW-1185">Reference proteome</keyword>
<keyword id="KW-0732">Signal</keyword>
<reference evidence="3 4" key="1">
    <citation type="journal article" date="2006" name="J. Cell Biol.">
        <title>Identification of novel chondroitin proteoglycans in Caenorhabditis elegans: embryonic cell division depends on CPG-1 and CPG-2.</title>
        <authorList>
            <person name="Olson S.K."/>
            <person name="Bishop J.R."/>
            <person name="Yates J.R."/>
            <person name="Oegema K."/>
            <person name="Esko J.D."/>
        </authorList>
    </citation>
    <scope>NUCLEOTIDE SEQUENCE [MRNA]</scope>
    <scope>IDENTIFICATION BY MASS SPECTROMETRY</scope>
    <scope>GLYCOSYLATION AT SER-25 AND SER-27</scope>
</reference>
<reference key="2">
    <citation type="journal article" date="1998" name="Science">
        <title>Genome sequence of the nematode C. elegans: a platform for investigating biology.</title>
        <authorList>
            <consortium name="The C. elegans sequencing consortium"/>
        </authorList>
    </citation>
    <scope>NUCLEOTIDE SEQUENCE [LARGE SCALE GENOMIC DNA]</scope>
    <source>
        <strain>Bristol N2</strain>
    </source>
</reference>
<name>CPG9_CAEEL</name>
<feature type="signal peptide" evidence="1">
    <location>
        <begin position="1"/>
        <end position="19"/>
    </location>
</feature>
<feature type="chain" id="PRO_0000320230" description="Chondroitin proteoglycan 9">
    <location>
        <begin position="20"/>
        <end position="69"/>
    </location>
</feature>
<feature type="glycosylation site" description="O-linked (Xyl...) (chondroitin sulfate) serine" evidence="2">
    <location>
        <position position="25"/>
    </location>
</feature>
<feature type="glycosylation site" description="O-linked (Xyl...) (chondroitin sulfate) serine" evidence="2">
    <location>
        <position position="27"/>
    </location>
</feature>
<sequence length="69" mass="7153">MHLWQLVLLVILFFGAAFGADLEGSGSGDVSTDAKEAILNAQTLLDAVSSDGSGADVEASGEDVQTFFF</sequence>
<accession>Q95XP7</accession>
<protein>
    <recommendedName>
        <fullName>Chondroitin proteoglycan 9</fullName>
    </recommendedName>
</protein>